<gene>
    <name evidence="1" type="primary">sucC</name>
    <name type="ordered locus">ESA_02620</name>
</gene>
<dbReference type="EC" id="6.2.1.5" evidence="1"/>
<dbReference type="EMBL" id="CP000783">
    <property type="protein sequence ID" value="ABU77860.1"/>
    <property type="molecule type" value="Genomic_DNA"/>
</dbReference>
<dbReference type="RefSeq" id="WP_004385341.1">
    <property type="nucleotide sequence ID" value="NC_009778.1"/>
</dbReference>
<dbReference type="SMR" id="A7MQX5"/>
<dbReference type="GeneID" id="56731415"/>
<dbReference type="KEGG" id="esa:ESA_02620"/>
<dbReference type="HOGENOM" id="CLU_037430_0_2_6"/>
<dbReference type="UniPathway" id="UPA00223">
    <property type="reaction ID" value="UER00999"/>
</dbReference>
<dbReference type="Proteomes" id="UP000000260">
    <property type="component" value="Chromosome"/>
</dbReference>
<dbReference type="GO" id="GO:0005829">
    <property type="term" value="C:cytosol"/>
    <property type="evidence" value="ECO:0007669"/>
    <property type="project" value="TreeGrafter"/>
</dbReference>
<dbReference type="GO" id="GO:0042709">
    <property type="term" value="C:succinate-CoA ligase complex"/>
    <property type="evidence" value="ECO:0007669"/>
    <property type="project" value="TreeGrafter"/>
</dbReference>
<dbReference type="GO" id="GO:0005524">
    <property type="term" value="F:ATP binding"/>
    <property type="evidence" value="ECO:0007669"/>
    <property type="project" value="UniProtKB-UniRule"/>
</dbReference>
<dbReference type="GO" id="GO:0000287">
    <property type="term" value="F:magnesium ion binding"/>
    <property type="evidence" value="ECO:0007669"/>
    <property type="project" value="UniProtKB-UniRule"/>
</dbReference>
<dbReference type="GO" id="GO:0004775">
    <property type="term" value="F:succinate-CoA ligase (ADP-forming) activity"/>
    <property type="evidence" value="ECO:0007669"/>
    <property type="project" value="UniProtKB-UniRule"/>
</dbReference>
<dbReference type="GO" id="GO:0004776">
    <property type="term" value="F:succinate-CoA ligase (GDP-forming) activity"/>
    <property type="evidence" value="ECO:0007669"/>
    <property type="project" value="RHEA"/>
</dbReference>
<dbReference type="GO" id="GO:0006104">
    <property type="term" value="P:succinyl-CoA metabolic process"/>
    <property type="evidence" value="ECO:0007669"/>
    <property type="project" value="TreeGrafter"/>
</dbReference>
<dbReference type="GO" id="GO:0006099">
    <property type="term" value="P:tricarboxylic acid cycle"/>
    <property type="evidence" value="ECO:0007669"/>
    <property type="project" value="UniProtKB-UniRule"/>
</dbReference>
<dbReference type="FunFam" id="3.30.1490.20:FF:000002">
    <property type="entry name" value="Succinate--CoA ligase [ADP-forming] subunit beta"/>
    <property type="match status" value="1"/>
</dbReference>
<dbReference type="FunFam" id="3.30.470.20:FF:000002">
    <property type="entry name" value="Succinate--CoA ligase [ADP-forming] subunit beta"/>
    <property type="match status" value="1"/>
</dbReference>
<dbReference type="FunFam" id="3.40.50.261:FF:000001">
    <property type="entry name" value="Succinate--CoA ligase [ADP-forming] subunit beta"/>
    <property type="match status" value="1"/>
</dbReference>
<dbReference type="Gene3D" id="3.30.1490.20">
    <property type="entry name" value="ATP-grasp fold, A domain"/>
    <property type="match status" value="1"/>
</dbReference>
<dbReference type="Gene3D" id="3.30.470.20">
    <property type="entry name" value="ATP-grasp fold, B domain"/>
    <property type="match status" value="1"/>
</dbReference>
<dbReference type="Gene3D" id="3.40.50.261">
    <property type="entry name" value="Succinyl-CoA synthetase domains"/>
    <property type="match status" value="1"/>
</dbReference>
<dbReference type="HAMAP" id="MF_00558">
    <property type="entry name" value="Succ_CoA_beta"/>
    <property type="match status" value="1"/>
</dbReference>
<dbReference type="InterPro" id="IPR011761">
    <property type="entry name" value="ATP-grasp"/>
</dbReference>
<dbReference type="InterPro" id="IPR013650">
    <property type="entry name" value="ATP-grasp_succ-CoA_synth-type"/>
</dbReference>
<dbReference type="InterPro" id="IPR013815">
    <property type="entry name" value="ATP_grasp_subdomain_1"/>
</dbReference>
<dbReference type="InterPro" id="IPR017866">
    <property type="entry name" value="Succ-CoA_synthase_bsu_CS"/>
</dbReference>
<dbReference type="InterPro" id="IPR005811">
    <property type="entry name" value="SUCC_ACL_C"/>
</dbReference>
<dbReference type="InterPro" id="IPR005809">
    <property type="entry name" value="Succ_CoA_ligase-like_bsu"/>
</dbReference>
<dbReference type="InterPro" id="IPR016102">
    <property type="entry name" value="Succinyl-CoA_synth-like"/>
</dbReference>
<dbReference type="NCBIfam" id="NF001913">
    <property type="entry name" value="PRK00696.1"/>
    <property type="match status" value="1"/>
</dbReference>
<dbReference type="NCBIfam" id="TIGR01016">
    <property type="entry name" value="sucCoAbeta"/>
    <property type="match status" value="1"/>
</dbReference>
<dbReference type="PANTHER" id="PTHR11815:SF10">
    <property type="entry name" value="SUCCINATE--COA LIGASE [GDP-FORMING] SUBUNIT BETA, MITOCHONDRIAL"/>
    <property type="match status" value="1"/>
</dbReference>
<dbReference type="PANTHER" id="PTHR11815">
    <property type="entry name" value="SUCCINYL-COA SYNTHETASE BETA CHAIN"/>
    <property type="match status" value="1"/>
</dbReference>
<dbReference type="Pfam" id="PF08442">
    <property type="entry name" value="ATP-grasp_2"/>
    <property type="match status" value="1"/>
</dbReference>
<dbReference type="Pfam" id="PF00549">
    <property type="entry name" value="Ligase_CoA"/>
    <property type="match status" value="1"/>
</dbReference>
<dbReference type="PIRSF" id="PIRSF001554">
    <property type="entry name" value="SucCS_beta"/>
    <property type="match status" value="1"/>
</dbReference>
<dbReference type="SUPFAM" id="SSF56059">
    <property type="entry name" value="Glutathione synthetase ATP-binding domain-like"/>
    <property type="match status" value="1"/>
</dbReference>
<dbReference type="SUPFAM" id="SSF52210">
    <property type="entry name" value="Succinyl-CoA synthetase domains"/>
    <property type="match status" value="1"/>
</dbReference>
<dbReference type="PROSITE" id="PS50975">
    <property type="entry name" value="ATP_GRASP"/>
    <property type="match status" value="1"/>
</dbReference>
<dbReference type="PROSITE" id="PS01217">
    <property type="entry name" value="SUCCINYL_COA_LIG_3"/>
    <property type="match status" value="1"/>
</dbReference>
<feature type="chain" id="PRO_1000082081" description="Succinate--CoA ligase [ADP-forming] subunit beta">
    <location>
        <begin position="1"/>
        <end position="388"/>
    </location>
</feature>
<feature type="domain" description="ATP-grasp" evidence="1">
    <location>
        <begin position="9"/>
        <end position="244"/>
    </location>
</feature>
<feature type="binding site" evidence="1">
    <location>
        <position position="46"/>
    </location>
    <ligand>
        <name>ATP</name>
        <dbReference type="ChEBI" id="CHEBI:30616"/>
    </ligand>
</feature>
<feature type="binding site" evidence="1">
    <location>
        <begin position="53"/>
        <end position="55"/>
    </location>
    <ligand>
        <name>ATP</name>
        <dbReference type="ChEBI" id="CHEBI:30616"/>
    </ligand>
</feature>
<feature type="binding site" evidence="1">
    <location>
        <position position="99"/>
    </location>
    <ligand>
        <name>ATP</name>
        <dbReference type="ChEBI" id="CHEBI:30616"/>
    </ligand>
</feature>
<feature type="binding site" evidence="1">
    <location>
        <position position="102"/>
    </location>
    <ligand>
        <name>ATP</name>
        <dbReference type="ChEBI" id="CHEBI:30616"/>
    </ligand>
</feature>
<feature type="binding site" evidence="1">
    <location>
        <position position="107"/>
    </location>
    <ligand>
        <name>ATP</name>
        <dbReference type="ChEBI" id="CHEBI:30616"/>
    </ligand>
</feature>
<feature type="binding site" evidence="1">
    <location>
        <position position="199"/>
    </location>
    <ligand>
        <name>Mg(2+)</name>
        <dbReference type="ChEBI" id="CHEBI:18420"/>
    </ligand>
</feature>
<feature type="binding site" evidence="1">
    <location>
        <position position="213"/>
    </location>
    <ligand>
        <name>Mg(2+)</name>
        <dbReference type="ChEBI" id="CHEBI:18420"/>
    </ligand>
</feature>
<feature type="binding site" evidence="1">
    <location>
        <position position="264"/>
    </location>
    <ligand>
        <name>substrate</name>
        <note>ligand shared with subunit alpha</note>
    </ligand>
</feature>
<feature type="binding site" evidence="1">
    <location>
        <begin position="321"/>
        <end position="323"/>
    </location>
    <ligand>
        <name>substrate</name>
        <note>ligand shared with subunit alpha</note>
    </ligand>
</feature>
<keyword id="KW-0067">ATP-binding</keyword>
<keyword id="KW-0436">Ligase</keyword>
<keyword id="KW-0460">Magnesium</keyword>
<keyword id="KW-0479">Metal-binding</keyword>
<keyword id="KW-0547">Nucleotide-binding</keyword>
<keyword id="KW-1185">Reference proteome</keyword>
<keyword id="KW-0816">Tricarboxylic acid cycle</keyword>
<proteinExistence type="inferred from homology"/>
<sequence>MNLHEYQAKQLFARSGLPTPVGYACSTPREAEEAASKIGSGPWVVKCQVHAGGRGKAGGVKVVKSKEEIRAFAEHWLGKRLVTYQTDANGQPVNQILVEAATDIAKELYLGAVVDRGSRRVVFMASTEGGVEIEKVAEETPHLIHKVAIDPLTGPMPYQGRELAFKLGLEGKLVQQFTKVFMGLANIFLERDLALIEINPLVITSQGDLICLDGKLGADGNALFRQPDLREMRDQSQEDPREAQAAQWELNYVALDGNIGCMVNGAGLAMGTMDIVKLHGGEPANFLDVGGGATKERVTEAFKIILSDDKVKAVLVNIFGGIVRCDLIADGIIGAVAEVGVNVPVVVRLEGNNAELGAKKLADSGLNIIAAKSLTDAAQQVVAAVEGK</sequence>
<evidence type="ECO:0000255" key="1">
    <source>
        <dbReference type="HAMAP-Rule" id="MF_00558"/>
    </source>
</evidence>
<reference key="1">
    <citation type="journal article" date="2010" name="PLoS ONE">
        <title>Genome sequence of Cronobacter sakazakii BAA-894 and comparative genomic hybridization analysis with other Cronobacter species.</title>
        <authorList>
            <person name="Kucerova E."/>
            <person name="Clifton S.W."/>
            <person name="Xia X.Q."/>
            <person name="Long F."/>
            <person name="Porwollik S."/>
            <person name="Fulton L."/>
            <person name="Fronick C."/>
            <person name="Minx P."/>
            <person name="Kyung K."/>
            <person name="Warren W."/>
            <person name="Fulton R."/>
            <person name="Feng D."/>
            <person name="Wollam A."/>
            <person name="Shah N."/>
            <person name="Bhonagiri V."/>
            <person name="Nash W.E."/>
            <person name="Hallsworth-Pepin K."/>
            <person name="Wilson R.K."/>
            <person name="McClelland M."/>
            <person name="Forsythe S.J."/>
        </authorList>
    </citation>
    <scope>NUCLEOTIDE SEQUENCE [LARGE SCALE GENOMIC DNA]</scope>
    <source>
        <strain>ATCC BAA-894</strain>
    </source>
</reference>
<name>SUCC_CROS8</name>
<organism>
    <name type="scientific">Cronobacter sakazakii (strain ATCC BAA-894)</name>
    <name type="common">Enterobacter sakazakii</name>
    <dbReference type="NCBI Taxonomy" id="290339"/>
    <lineage>
        <taxon>Bacteria</taxon>
        <taxon>Pseudomonadati</taxon>
        <taxon>Pseudomonadota</taxon>
        <taxon>Gammaproteobacteria</taxon>
        <taxon>Enterobacterales</taxon>
        <taxon>Enterobacteriaceae</taxon>
        <taxon>Cronobacter</taxon>
    </lineage>
</organism>
<protein>
    <recommendedName>
        <fullName evidence="1">Succinate--CoA ligase [ADP-forming] subunit beta</fullName>
        <ecNumber evidence="1">6.2.1.5</ecNumber>
    </recommendedName>
    <alternativeName>
        <fullName evidence="1">Succinyl-CoA synthetase subunit beta</fullName>
        <shortName evidence="1">SCS-beta</shortName>
    </alternativeName>
</protein>
<accession>A7MQX5</accession>
<comment type="function">
    <text evidence="1">Succinyl-CoA synthetase functions in the citric acid cycle (TCA), coupling the hydrolysis of succinyl-CoA to the synthesis of either ATP or GTP and thus represents the only step of substrate-level phosphorylation in the TCA. The beta subunit provides nucleotide specificity of the enzyme and binds the substrate succinate, while the binding sites for coenzyme A and phosphate are found in the alpha subunit.</text>
</comment>
<comment type="catalytic activity">
    <reaction evidence="1">
        <text>succinate + ATP + CoA = succinyl-CoA + ADP + phosphate</text>
        <dbReference type="Rhea" id="RHEA:17661"/>
        <dbReference type="ChEBI" id="CHEBI:30031"/>
        <dbReference type="ChEBI" id="CHEBI:30616"/>
        <dbReference type="ChEBI" id="CHEBI:43474"/>
        <dbReference type="ChEBI" id="CHEBI:57287"/>
        <dbReference type="ChEBI" id="CHEBI:57292"/>
        <dbReference type="ChEBI" id="CHEBI:456216"/>
        <dbReference type="EC" id="6.2.1.5"/>
    </reaction>
    <physiologicalReaction direction="right-to-left" evidence="1">
        <dbReference type="Rhea" id="RHEA:17663"/>
    </physiologicalReaction>
</comment>
<comment type="catalytic activity">
    <reaction evidence="1">
        <text>GTP + succinate + CoA = succinyl-CoA + GDP + phosphate</text>
        <dbReference type="Rhea" id="RHEA:22120"/>
        <dbReference type="ChEBI" id="CHEBI:30031"/>
        <dbReference type="ChEBI" id="CHEBI:37565"/>
        <dbReference type="ChEBI" id="CHEBI:43474"/>
        <dbReference type="ChEBI" id="CHEBI:57287"/>
        <dbReference type="ChEBI" id="CHEBI:57292"/>
        <dbReference type="ChEBI" id="CHEBI:58189"/>
    </reaction>
    <physiologicalReaction direction="right-to-left" evidence="1">
        <dbReference type="Rhea" id="RHEA:22122"/>
    </physiologicalReaction>
</comment>
<comment type="cofactor">
    <cofactor evidence="1">
        <name>Mg(2+)</name>
        <dbReference type="ChEBI" id="CHEBI:18420"/>
    </cofactor>
    <text evidence="1">Binds 1 Mg(2+) ion per subunit.</text>
</comment>
<comment type="pathway">
    <text evidence="1">Carbohydrate metabolism; tricarboxylic acid cycle; succinate from succinyl-CoA (ligase route): step 1/1.</text>
</comment>
<comment type="subunit">
    <text evidence="1">Heterotetramer of two alpha and two beta subunits.</text>
</comment>
<comment type="similarity">
    <text evidence="1">Belongs to the succinate/malate CoA ligase beta subunit family.</text>
</comment>